<protein>
    <recommendedName>
        <fullName>Ubiquitin carboxyl-terminal hydrolase 8</fullName>
        <ecNumber evidence="8 11 12">3.4.19.12</ecNumber>
    </recommendedName>
    <alternativeName>
        <fullName>Deubiquitinating enzyme 8</fullName>
    </alternativeName>
    <alternativeName>
        <fullName>SAGA complex subunit UBP8</fullName>
    </alternativeName>
    <alternativeName>
        <fullName>Ubiquitin thioesterase 8</fullName>
    </alternativeName>
    <alternativeName>
        <fullName>Ubiquitin-specific-processing protease 8</fullName>
    </alternativeName>
</protein>
<name>UBP8_YEAST</name>
<evidence type="ECO:0000255" key="1">
    <source>
        <dbReference type="PROSITE-ProRule" id="PRU00502"/>
    </source>
</evidence>
<evidence type="ECO:0000255" key="2">
    <source>
        <dbReference type="PROSITE-ProRule" id="PRU01035"/>
    </source>
</evidence>
<evidence type="ECO:0000269" key="3">
    <source>
    </source>
</evidence>
<evidence type="ECO:0000269" key="4">
    <source>
    </source>
</evidence>
<evidence type="ECO:0000269" key="5">
    <source>
    </source>
</evidence>
<evidence type="ECO:0000269" key="6">
    <source>
    </source>
</evidence>
<evidence type="ECO:0000269" key="7">
    <source>
    </source>
</evidence>
<evidence type="ECO:0000269" key="8">
    <source>
    </source>
</evidence>
<evidence type="ECO:0000269" key="9">
    <source>
    </source>
</evidence>
<evidence type="ECO:0000269" key="10">
    <source>
    </source>
</evidence>
<evidence type="ECO:0000269" key="11">
    <source>
    </source>
</evidence>
<evidence type="ECO:0000269" key="12">
    <source>
    </source>
</evidence>
<evidence type="ECO:0000269" key="13">
    <source>
    </source>
</evidence>
<evidence type="ECO:0000269" key="14">
    <source>
    </source>
</evidence>
<evidence type="ECO:0000269" key="15">
    <source>
    </source>
</evidence>
<evidence type="ECO:0000269" key="16">
    <source>
    </source>
</evidence>
<evidence type="ECO:0000269" key="17">
    <source>
    </source>
</evidence>
<evidence type="ECO:0000269" key="18">
    <source>
    </source>
</evidence>
<evidence type="ECO:0000269" key="19">
    <source>
    </source>
</evidence>
<evidence type="ECO:0000269" key="20">
    <source>
    </source>
</evidence>
<evidence type="ECO:0000305" key="21"/>
<evidence type="ECO:0000305" key="22">
    <source>
    </source>
</evidence>
<evidence type="ECO:0000305" key="23">
    <source>
    </source>
</evidence>
<evidence type="ECO:0007744" key="24">
    <source>
        <dbReference type="PDB" id="3M99"/>
    </source>
</evidence>
<evidence type="ECO:0007744" key="25">
    <source>
        <dbReference type="PDB" id="3MHH"/>
    </source>
</evidence>
<evidence type="ECO:0007744" key="26">
    <source>
        <dbReference type="PDB" id="3MHS"/>
    </source>
</evidence>
<evidence type="ECO:0007744" key="27">
    <source>
        <dbReference type="PDB" id="4FIP"/>
    </source>
</evidence>
<evidence type="ECO:0007744" key="28">
    <source>
        <dbReference type="PDB" id="4FJC"/>
    </source>
</evidence>
<evidence type="ECO:0007744" key="29">
    <source>
        <dbReference type="PDB" id="4FK5"/>
    </source>
</evidence>
<evidence type="ECO:0007744" key="30">
    <source>
        <dbReference type="PDB" id="4WA6"/>
    </source>
</evidence>
<evidence type="ECO:0007744" key="31">
    <source>
        <dbReference type="PDB" id="4ZUX"/>
    </source>
</evidence>
<evidence type="ECO:0007744" key="32">
    <source>
        <dbReference type="PDB" id="6AQR"/>
    </source>
</evidence>
<evidence type="ECO:0007744" key="33">
    <source>
        <dbReference type="PDB" id="6T9L"/>
    </source>
</evidence>
<evidence type="ECO:0007829" key="34">
    <source>
        <dbReference type="PDB" id="3M99"/>
    </source>
</evidence>
<evidence type="ECO:0007829" key="35">
    <source>
        <dbReference type="PDB" id="3MHS"/>
    </source>
</evidence>
<evidence type="ECO:0007829" key="36">
    <source>
        <dbReference type="PDB" id="4FJC"/>
    </source>
</evidence>
<evidence type="ECO:0007829" key="37">
    <source>
        <dbReference type="PDB" id="4FK5"/>
    </source>
</evidence>
<evidence type="ECO:0007829" key="38">
    <source>
        <dbReference type="PDB" id="6AQR"/>
    </source>
</evidence>
<keyword id="KW-0002">3D-structure</keyword>
<keyword id="KW-0378">Hydrolase</keyword>
<keyword id="KW-0479">Metal-binding</keyword>
<keyword id="KW-0539">Nucleus</keyword>
<keyword id="KW-0645">Protease</keyword>
<keyword id="KW-1185">Reference proteome</keyword>
<keyword id="KW-0788">Thiol protease</keyword>
<keyword id="KW-0804">Transcription</keyword>
<keyword id="KW-0805">Transcription regulation</keyword>
<keyword id="KW-0833">Ubl conjugation pathway</keyword>
<keyword id="KW-0862">Zinc</keyword>
<keyword id="KW-0863">Zinc-finger</keyword>
<accession>P50102</accession>
<accession>D6W048</accession>
<gene>
    <name type="primary">UBP8</name>
    <name type="ordered locus">YMR223W</name>
    <name type="ORF">YM9959.05</name>
</gene>
<sequence length="471" mass="53623">MSICPHIQQVFQNEKSKDGVLKTCNAARYILNHSVPKEKFLNTMKCGTCHEINSGATFMCLQCGFCGCWNHSHFLSHSKQIGHIFGINSNNGLLFCFKCEDYIGNIDLINDAILAKYWDDVCTKTMVPSMERRDGLSGLINMGSTCFMSSILQCLIHNPYFIRHSMSQIHSNNCKVRSPDKCFSCALDKIVHELYGALNTKQASSSSTSTNRQTGFIYLLTCAWKINQNLAGYSQQDAHEFWQFIINQIHQSYVLDLPNAKEVSRANNKQCECIVHTVFEGSLESSIVCPGCQNNSKTTIDPFLDLSLDIKDKKKLYECLDSFHKKEQLKDFNYHCGECNSTQDAIKQLGIHKLPSVLVLQLKRFEHLLNGSNRKLDDFIEFPTYLNMKNYCSTKEKDKHSENGKVPDIIYELIGIVSHKGTVNEGHYIAFCKISGGQWFKFNDSMVSSISQEEVLKEQAYLLFYTIRQVN</sequence>
<comment type="function">
    <text evidence="3 4 6 8 9 10 11 12 14 16 17 18 19 20">Histone deubiquitinating enzyme component of the transcription coactivator SAGA complex (PubMed:14563679, PubMed:14660634, PubMed:25216679, PubMed:28918903). SAGA acts as a general cofactor required for essentially all RNA polymerase II transcription (PubMed:10864329, PubMed:25216679, PubMed:28918903). At the promoters, SAGA is required for transcription pre-initiation complex (PIC) recruitment. It influences RNA polymerase II transcriptional activity through different activities such as TBP interaction (via core/TAF module) and promoter selectivity, interaction with transcription activators (via Tra1/SPT module), and chromatin modification through histone acetylation (via HAT module) and deubiquitination (via DUB module) (PubMed:31969703). SAGA preferentially acetylates histones H3 (to form H3K9ac, H3K14ac, H3K18ac and H3K23ac) and H2B and deubiquitinates histone H2B (PubMed:10026213, PubMed:14660634, PubMed:15657441). SAGA interacts with DNA via upstream activating sequences (UASs) (PubMed:28918903). Also identified in a modified version of SAGA named SALSA or SLIK (PubMed:12446794, PubMed:14660634, PubMed:15647753). The cleavage of SPT7 and the absence of the SPT8 subunit in SLIK neither drive any major conformational differences in its structure compared with SAGA, nor significantly affect HAT, DUB, or DNA-binding activities (PubMed:33864814). Within the DUB module, the correctly positioned zinc finger domains of SGF11 and SGF73 are both required to fully activate the ubiquitin hydrolase UBP8 (PubMed:15657442, PubMed:20434206). The DUB module is also linked to the splicing efficiency of many transcripts (PubMed:23209445).</text>
</comment>
<comment type="catalytic activity">
    <reaction evidence="7 8 11 12">
        <text>Thiol-dependent hydrolysis of ester, thioester, amide, peptide and isopeptide bonds formed by the C-terminal Gly of ubiquitin (a 76-residue protein attached to proteins as an intracellular targeting signal).</text>
        <dbReference type="EC" id="3.4.19.12"/>
    </reaction>
</comment>
<comment type="biophysicochemical properties">
    <kinetics>
        <KM evidence="13">1.5 uM for ubiquitin-AMC</KM>
        <text evidence="13">kcat is 0.17 sec(-1) with ubiquitin-AMC as substrate.</text>
    </kinetics>
</comment>
<comment type="subunit">
    <text evidence="5 6 9 10 11 19 20">Component of the 1.8 MDa SAGA (Spt-Ada-Gcn5 acetyltransferase) complex, which is composed of 19 subunits TRA1, SPT7, TAF5, NGG1/ADA3, SGF73, SPT20/ADA5, SPT8, TAF12, TAF6, HFI1/ADA1, UBP8, GCN5, ADA2, SPT3, SGF29, TAF10, TAF9, SGF11 and SUS1 (PubMed:12052880, PubMed:14660634, PubMed:15657441, PubMed:31969703). The SAGA complex is composed of 4 modules, namely the HAT (histone acetyltransferase) module (GCN5, ADA2, NGG1/ADA3 and SGF29), the DUB (deubiquitinating) module (UBP8, SGF11, SGF73 and SUS1), the core or TAF (TBP-associated factor) module (TAF5, TAF6, TAF9, TAF10 and TAF12), and the Tra1 or SPT (Suppressor of Ty) module (TRA1, HFI1/ADA1, SPT3, SPT7, SPT8 and SPT20/ADA5). The Tra1/SPT module binds activators, the core module recruits TBP (TATA-binding protein), the HAT module contains the histone H3 acetyltransferase GCN5, and the DUB module comprises the histone H2B deubiquitinase UBP8 (PubMed:14660634, PubMed:15657441, PubMed:31969703). Also identified in an altered form of SAGA, named SALSA (SAGA altered, Spt8 absent) or SLIK (SAGA-like) complex, which contains a C-terminal truncated form of SPT7 and is missing SPT8 (PubMed:12446794, PubMed:15647753). However, it has been shown that the SAGA and SAGA-like SALSA/SLIK transcriptional coactivators are structurally and biochemically equivalent (PubMed:33864814).</text>
</comment>
<comment type="interaction">
    <interactant intactId="EBI-19863">
        <id>P50102</id>
    </interactant>
    <interactant intactId="EBI-8287">
        <id>Q12060</id>
        <label>HFI1</label>
    </interactant>
    <organismsDiffer>false</organismsDiffer>
    <experiments>10</experiments>
</comment>
<comment type="subcellular location">
    <subcellularLocation>
        <location evidence="22">Nucleus</location>
    </subcellularLocation>
</comment>
<comment type="domain">
    <text>The UBP-type zinc finger domain is required for the interaction with the SAGA complex.</text>
</comment>
<comment type="domain">
    <text evidence="15">The USP domain is the catalytic domain, but it is only active when in complex with the other DUB module subunits.</text>
</comment>
<comment type="miscellaneous">
    <text evidence="7">Present with 1030 molecules/cell in log phase SD medium.</text>
</comment>
<comment type="similarity">
    <text evidence="21">Belongs to the peptidase C19 family. UBP8 subfamily.</text>
</comment>
<organism>
    <name type="scientific">Saccharomyces cerevisiae (strain ATCC 204508 / S288c)</name>
    <name type="common">Baker's yeast</name>
    <dbReference type="NCBI Taxonomy" id="559292"/>
    <lineage>
        <taxon>Eukaryota</taxon>
        <taxon>Fungi</taxon>
        <taxon>Dikarya</taxon>
        <taxon>Ascomycota</taxon>
        <taxon>Saccharomycotina</taxon>
        <taxon>Saccharomycetes</taxon>
        <taxon>Saccharomycetales</taxon>
        <taxon>Saccharomycetaceae</taxon>
        <taxon>Saccharomyces</taxon>
    </lineage>
</organism>
<reference key="1">
    <citation type="journal article" date="1997" name="Nature">
        <title>The nucleotide sequence of Saccharomyces cerevisiae chromosome XIII.</title>
        <authorList>
            <person name="Bowman S."/>
            <person name="Churcher C.M."/>
            <person name="Badcock K."/>
            <person name="Brown D."/>
            <person name="Chillingworth T."/>
            <person name="Connor R."/>
            <person name="Dedman K."/>
            <person name="Devlin K."/>
            <person name="Gentles S."/>
            <person name="Hamlin N."/>
            <person name="Hunt S."/>
            <person name="Jagels K."/>
            <person name="Lye G."/>
            <person name="Moule S."/>
            <person name="Odell C."/>
            <person name="Pearson D."/>
            <person name="Rajandream M.A."/>
            <person name="Rice P."/>
            <person name="Skelton J."/>
            <person name="Walsh S.V."/>
            <person name="Whitehead S."/>
            <person name="Barrell B.G."/>
        </authorList>
    </citation>
    <scope>NUCLEOTIDE SEQUENCE [LARGE SCALE GENOMIC DNA]</scope>
    <source>
        <strain>ATCC 204508 / S288c</strain>
    </source>
</reference>
<reference key="2">
    <citation type="journal article" date="2014" name="G3 (Bethesda)">
        <title>The reference genome sequence of Saccharomyces cerevisiae: Then and now.</title>
        <authorList>
            <person name="Engel S.R."/>
            <person name="Dietrich F.S."/>
            <person name="Fisk D.G."/>
            <person name="Binkley G."/>
            <person name="Balakrishnan R."/>
            <person name="Costanzo M.C."/>
            <person name="Dwight S.S."/>
            <person name="Hitz B.C."/>
            <person name="Karra K."/>
            <person name="Nash R.S."/>
            <person name="Weng S."/>
            <person name="Wong E.D."/>
            <person name="Lloyd P."/>
            <person name="Skrzypek M.S."/>
            <person name="Miyasato S.R."/>
            <person name="Simison M."/>
            <person name="Cherry J.M."/>
        </authorList>
    </citation>
    <scope>GENOME REANNOTATION</scope>
    <source>
        <strain>ATCC 204508 / S288c</strain>
    </source>
</reference>
<reference key="3">
    <citation type="journal article" date="1999" name="J. Biol. Chem.">
        <title>Expanded lysine acetylation specificity of Gcn5 in native complexes.</title>
        <authorList>
            <person name="Grant P.A."/>
            <person name="Eberharter A."/>
            <person name="John S."/>
            <person name="Cook R.G."/>
            <person name="Turner B.M."/>
            <person name="Workman J.L."/>
        </authorList>
    </citation>
    <scope>FUNCTION IN HISTONE ACETYLATION AT THE SAGA COMPLEX</scope>
</reference>
<reference key="4">
    <citation type="journal article" date="2000" name="Nature">
        <title>Redundant roles for the TFIID and SAGA complexes in global transcription.</title>
        <authorList>
            <person name="Lee T.I."/>
            <person name="Causton H.C."/>
            <person name="Holstege F.C."/>
            <person name="Shen W.C."/>
            <person name="Hannett N."/>
            <person name="Jennings E.G."/>
            <person name="Winston F."/>
            <person name="Green M.R."/>
            <person name="Young R.A."/>
        </authorList>
    </citation>
    <scope>FUNCTION</scope>
</reference>
<reference key="5">
    <citation type="journal article" date="2002" name="Mol. Cell. Biol.">
        <title>The novel SLIK histone acetyltransferase complex functions in the yeast retrograde response pathway.</title>
        <authorList>
            <person name="Pray-Grant M.G."/>
            <person name="Schieltz D."/>
            <person name="McMahon S.J."/>
            <person name="Wood J.M."/>
            <person name="Kennedy E.L."/>
            <person name="Cook R.G."/>
            <person name="Workman J.L."/>
            <person name="Yates J.R. III"/>
            <person name="Grant P.A."/>
        </authorList>
    </citation>
    <scope>IDENTIFICATION IN THE SLIK COMPLEX</scope>
</reference>
<reference key="6">
    <citation type="journal article" date="2002" name="Mol. Cell. Biol.">
        <title>Proteomics of the eukaryotic transcription machinery: identification of proteins associated with components of yeast TFIID by multidimensional mass spectrometry.</title>
        <authorList>
            <person name="Sanders S.L."/>
            <person name="Jennings J."/>
            <person name="Canutescu A."/>
            <person name="Link A.J."/>
            <person name="Weil P.A."/>
        </authorList>
    </citation>
    <scope>IDENTIFICATION IN THE SAGA COMPLEX</scope>
</reference>
<reference key="7">
    <citation type="journal article" date="2003" name="Genes Dev.">
        <title>Transcriptional activation via sequential histone H2B ubiquitylation and deubiquitylation, mediated by SAGA-associated Ubp8.</title>
        <authorList>
            <person name="Henry K.W."/>
            <person name="Wyce A."/>
            <person name="Lo W.-S."/>
            <person name="Duggan L.J."/>
            <person name="Emre N.C.T."/>
            <person name="Kao C.-F."/>
            <person name="Pillus L."/>
            <person name="Shilatifard A."/>
            <person name="Osley M.A."/>
            <person name="Berger S.L."/>
        </authorList>
    </citation>
    <scope>FUNCTION</scope>
    <scope>CATALYTIC ACTIVITY</scope>
</reference>
<reference key="8">
    <citation type="journal article" date="2003" name="Nature">
        <title>Global analysis of protein expression in yeast.</title>
        <authorList>
            <person name="Ghaemmaghami S."/>
            <person name="Huh W.-K."/>
            <person name="Bower K."/>
            <person name="Howson R.W."/>
            <person name="Belle A."/>
            <person name="Dephoure N."/>
            <person name="O'Shea E.K."/>
            <person name="Weissman J.S."/>
        </authorList>
    </citation>
    <scope>LEVEL OF PROTEIN EXPRESSION [LARGE SCALE ANALYSIS]</scope>
</reference>
<reference key="9">
    <citation type="journal article" date="2004" name="J. Biol. Chem.">
        <title>Deubiquitination of histone H2B by a yeast acetyltransferase complex regulates transcription.</title>
        <authorList>
            <person name="Daniel J.A."/>
            <person name="Torok M.S."/>
            <person name="Sun Z.W."/>
            <person name="Schieltz D."/>
            <person name="Allis C.D."/>
            <person name="Yates J.R. III"/>
            <person name="Grant P.A."/>
        </authorList>
    </citation>
    <scope>FUNCTION IN HISTONE DEUBIQUITINATION ACTIVITY OF THE SAGA COMPLEX</scope>
    <scope>IDENTIFICATION IN THE SAGA COMPLEX</scope>
    <scope>IDENTIFICATION IN THE SLIK COMPLEX</scope>
</reference>
<reference key="10">
    <citation type="journal article" date="2005" name="Mol. Cell. Biol.">
        <title>H2B ubiquitin protease Ubp8 and Sgf11 constitute a discrete functional module within the Saccharomyces cerevisiae SAGA complex.</title>
        <authorList>
            <person name="Ingvarsdottir K."/>
            <person name="Krogan N.J."/>
            <person name="Emre N.C.T."/>
            <person name="Wyce A."/>
            <person name="Thompson N.J."/>
            <person name="Emili A."/>
            <person name="Hughes T.R."/>
            <person name="Greenblatt J.F."/>
            <person name="Berger S.L."/>
        </authorList>
    </citation>
    <scope>FUNCTION IN HISTONE DEUBIQUITINATION ACTIVITY OF THE SAGA COMPLEX</scope>
    <scope>CATALYTIC ACTIVITY</scope>
    <scope>IDENTIFICATION IN THE SAGA COMPLEX</scope>
    <scope>INTERACTION WITH SGF11</scope>
    <scope>MUTAGENESIS OF CYS-46; CYS-49; HIS-77; CYS-146 AND HIS-419</scope>
</reference>
<reference key="11">
    <citation type="journal article" date="2005" name="Mol. Cell. Biol.">
        <title>The deubiquitylation activity of Ubp8 is dependent upon Sgf11 and its association with the SAGA complex.</title>
        <authorList>
            <person name="Lee K.K."/>
            <person name="Florens L."/>
            <person name="Swanson S.K."/>
            <person name="Washburn M.P."/>
            <person name="Workman J.L."/>
        </authorList>
    </citation>
    <scope>FUNCTION</scope>
    <scope>CATALYTIC ACTIVITY</scope>
</reference>
<reference key="12">
    <citation type="journal article" date="2005" name="Nature">
        <title>Chd1 chromodomain links histone H3 methylation with SAGA- and SLIK-dependent acetylation.</title>
        <authorList>
            <person name="Pray-Grant M.G."/>
            <person name="Daniel J.A."/>
            <person name="Schieltz D."/>
            <person name="Yates J.R. III"/>
            <person name="Grant P.A."/>
        </authorList>
    </citation>
    <scope>IDENTIFICATION IN THE SLIK COMPLEX</scope>
</reference>
<reference key="13">
    <citation type="journal article" date="2012" name="PLoS Genet.">
        <title>The yeast SR-like protein Npl3 links chromatin modification to mRNA processing.</title>
        <authorList>
            <person name="Moehle E.A."/>
            <person name="Ryan C.J."/>
            <person name="Krogan N.J."/>
            <person name="Kress T.L."/>
            <person name="Guthrie C."/>
        </authorList>
    </citation>
    <scope>FUNCTION</scope>
</reference>
<reference key="14">
    <citation type="journal article" date="2014" name="EMBO J.">
        <title>Architecture of the Saccharomyces cerevisiae SAGA transcription coactivator complex.</title>
        <authorList>
            <person name="Han Y."/>
            <person name="Luo J."/>
            <person name="Ranish J."/>
            <person name="Hahn S."/>
        </authorList>
    </citation>
    <scope>SUBUNIT</scope>
</reference>
<reference key="15">
    <citation type="journal article" date="2017" name="Mol. Cell">
        <title>SAGA is a general cofactor for RNA polymerase II transcription.</title>
        <authorList>
            <person name="Baptista T."/>
            <person name="Gruenberg S."/>
            <person name="Minoungou N."/>
            <person name="Koster M.J.E."/>
            <person name="Timmers H.T.M."/>
            <person name="Hahn S."/>
            <person name="Devys D."/>
            <person name="Tora L."/>
        </authorList>
    </citation>
    <scope>FUNCTION</scope>
</reference>
<reference key="16">
    <citation type="journal article" date="2021" name="J. Biol. Chem.">
        <title>SAGA and SAGA-like SLIK transcriptional coactivators are structurally and biochemically equivalent.</title>
        <authorList>
            <person name="Adamus K."/>
            <person name="Reboul C."/>
            <person name="Voss J."/>
            <person name="Huang C."/>
            <person name="Schittenhelm R.B."/>
            <person name="Le S.N."/>
            <person name="Ellisdon A.M."/>
            <person name="Elmlund H."/>
            <person name="Boudes M."/>
            <person name="Elmlund D."/>
        </authorList>
    </citation>
    <scope>FUNCTION</scope>
    <scope>SUBUNIT</scope>
</reference>
<reference evidence="24" key="17">
    <citation type="journal article" date="2010" name="Cell">
        <title>Structural basis for assembly and activation of the heterotetrameric SAGA histone H2B deubiquitinase module.</title>
        <authorList>
            <person name="Kohler A."/>
            <person name="Zimmerman E."/>
            <person name="Schneider M."/>
            <person name="Hurt E."/>
            <person name="Zheng N."/>
        </authorList>
    </citation>
    <scope>X-RAY CRYSTALLOGRAPHY (2.70 ANGSTROMS) IN COMPLEX WITH ZN(2+)</scope>
</reference>
<reference evidence="25 26" key="18">
    <citation type="journal article" date="2010" name="Science">
        <title>Structural insights into the assembly and function of the SAGA deubiquitinating module.</title>
        <authorList>
            <person name="Samara N.L."/>
            <person name="Datta A.B."/>
            <person name="Berndsen C.E."/>
            <person name="Zhang X."/>
            <person name="Yao T."/>
            <person name="Cohen R.E."/>
            <person name="Wolberger C."/>
        </authorList>
    </citation>
    <scope>X-RAY CRYSTALLOGRAPHY (1.89 ANGSTROMS) IN COMPLEX WITH ZN(2+) AND UBIQUITIN</scope>
    <scope>CATALYTIC ACTIVITY</scope>
    <scope>BIOPHYSICOCHEMICAL PROPERTIES</scope>
</reference>
<reference evidence="27 28 29" key="19">
    <citation type="journal article" date="2012" name="Structure">
        <title>A role for intersubunit interactions in maintaining SAGA deubiquitinating module structure and activity.</title>
        <authorList>
            <person name="Samara N.L."/>
            <person name="Ringel A.E."/>
            <person name="Wolberger C."/>
        </authorList>
    </citation>
    <scope>X-RAY CRYSTALLOGRAPHY (2.03 ANGSTROMS) IN COMPLEX WITH ZN(2+)</scope>
</reference>
<reference evidence="31" key="20">
    <citation type="journal article" date="2016" name="Science">
        <title>Structural basis for histone H2B deubiquitination by the SAGA DUB module.</title>
        <authorList>
            <person name="Morgan M.T."/>
            <person name="Haj-Yahya M."/>
            <person name="Ringel A.E."/>
            <person name="Bandi P."/>
            <person name="Brik A."/>
            <person name="Wolberger C."/>
        </authorList>
    </citation>
    <scope>X-RAY CRYSTALLOGRAPHY (3.82 ANGSTROMS) IN COMPLEX WITH ZN(2+) IN COMPLEX WITH UBIQUITIN AND A NUCLEOSOME</scope>
</reference>
<reference evidence="33" key="21">
    <citation type="journal article" date="2020" name="Nature">
        <title>Structure of the transcription coactivator SAGA.</title>
        <authorList>
            <person name="Wang H."/>
            <person name="Dienemann C."/>
            <person name="Stutzer A."/>
            <person name="Urlaub H."/>
            <person name="Cheung A.C.M."/>
            <person name="Cramer P."/>
        </authorList>
    </citation>
    <scope>STRUCTURE BY ELECTRON MICROSCOPY (3.60 ANGSTROMS) IN THE SAGA COMPLEX</scope>
</reference>
<proteinExistence type="evidence at protein level"/>
<feature type="chain" id="PRO_0000080593" description="Ubiquitin carboxyl-terminal hydrolase 8">
    <location>
        <begin position="1"/>
        <end position="471"/>
    </location>
</feature>
<feature type="domain" description="USP" evidence="2">
    <location>
        <begin position="137"/>
        <end position="468"/>
    </location>
</feature>
<feature type="zinc finger region" description="UBP-type; degenerate" evidence="1">
    <location>
        <begin position="22"/>
        <end position="122"/>
    </location>
</feature>
<feature type="active site" description="Nucleophile" evidence="2 23">
    <location>
        <position position="146"/>
    </location>
</feature>
<feature type="active site" description="Proton acceptor" evidence="2 23">
    <location>
        <position position="427"/>
    </location>
</feature>
<feature type="binding site" evidence="13 14 24 25 26 27 28 29 30 31 32">
    <location>
        <position position="4"/>
    </location>
    <ligand>
        <name>Zn(2+)</name>
        <dbReference type="ChEBI" id="CHEBI:29105"/>
        <label>1</label>
    </ligand>
</feature>
<feature type="binding site" evidence="13 14 24 25 26 27 28 29 30 31 32">
    <location>
        <position position="6"/>
    </location>
    <ligand>
        <name>Zn(2+)</name>
        <dbReference type="ChEBI" id="CHEBI:29105"/>
        <label>1</label>
    </ligand>
</feature>
<feature type="binding site" evidence="13 14 24 25 26 27 28 29 30 31 32">
    <location>
        <position position="46"/>
    </location>
    <ligand>
        <name>Zn(2+)</name>
        <dbReference type="ChEBI" id="CHEBI:29105"/>
        <label>2</label>
    </ligand>
</feature>
<feature type="binding site" evidence="13 14 24 25 26 27 28 29 30 31 32">
    <location>
        <position position="49"/>
    </location>
    <ligand>
        <name>Zn(2+)</name>
        <dbReference type="ChEBI" id="CHEBI:29105"/>
        <label>2</label>
    </ligand>
</feature>
<feature type="binding site" evidence="13 14 24 25 26 27 28 29 30 31 32">
    <location>
        <position position="60"/>
    </location>
    <ligand>
        <name>Zn(2+)</name>
        <dbReference type="ChEBI" id="CHEBI:29105"/>
        <label>3</label>
    </ligand>
</feature>
<feature type="binding site" evidence="13 14 24 25 26 27 28 29 30 31 32">
    <location>
        <position position="63"/>
    </location>
    <ligand>
        <name>Zn(2+)</name>
        <dbReference type="ChEBI" id="CHEBI:29105"/>
        <label>3</label>
    </ligand>
</feature>
<feature type="binding site" evidence="13 14 24 25 26 27 28 29 30 31 32">
    <location>
        <position position="68"/>
    </location>
    <ligand>
        <name>Zn(2+)</name>
        <dbReference type="ChEBI" id="CHEBI:29105"/>
        <label>2</label>
    </ligand>
</feature>
<feature type="binding site" evidence="13 14 24 25 26 27 28 29 30 31 32">
    <location>
        <position position="73"/>
    </location>
    <ligand>
        <name>Zn(2+)</name>
        <dbReference type="ChEBI" id="CHEBI:29105"/>
        <label>2</label>
    </ligand>
</feature>
<feature type="binding site" evidence="13 14 24">
    <location>
        <position position="77"/>
    </location>
    <ligand>
        <name>Zn(2+)</name>
        <dbReference type="ChEBI" id="CHEBI:29105"/>
        <label>3</label>
    </ligand>
</feature>
<feature type="binding site" evidence="13 14 24 25 26 27 28 29 30 31 32">
    <location>
        <position position="83"/>
    </location>
    <ligand>
        <name>Zn(2+)</name>
        <dbReference type="ChEBI" id="CHEBI:29105"/>
        <label>3</label>
    </ligand>
</feature>
<feature type="binding site" evidence="13 14 24 25 26 27 28 29 30 31 32">
    <location>
        <position position="96"/>
    </location>
    <ligand>
        <name>Zn(2+)</name>
        <dbReference type="ChEBI" id="CHEBI:29105"/>
        <label>1</label>
    </ligand>
</feature>
<feature type="binding site" evidence="13 14 24 25 26 27 28 29 30 31 32">
    <location>
        <position position="99"/>
    </location>
    <ligand>
        <name>Zn(2+)</name>
        <dbReference type="ChEBI" id="CHEBI:29105"/>
        <label>1</label>
    </ligand>
</feature>
<feature type="binding site" evidence="13 14 24 25 26 27 28 29 30 31 32">
    <location>
        <position position="170"/>
    </location>
    <ligand>
        <name>Zn(2+)</name>
        <dbReference type="ChEBI" id="CHEBI:29105"/>
        <label>4</label>
    </ligand>
</feature>
<feature type="binding site" evidence="13 14 24 25 26 27 28 29 30 31 32">
    <location>
        <position position="174"/>
    </location>
    <ligand>
        <name>Zn(2+)</name>
        <dbReference type="ChEBI" id="CHEBI:29105"/>
        <label>4</label>
    </ligand>
</feature>
<feature type="binding site" evidence="13 14 24 25 26 27 28 29 30 31 32">
    <location>
        <position position="182"/>
    </location>
    <ligand>
        <name>Zn(2+)</name>
        <dbReference type="ChEBI" id="CHEBI:29105"/>
        <label>4</label>
    </ligand>
</feature>
<feature type="binding site" evidence="13 14 24 25 26 27 28 29 30 31 32">
    <location>
        <position position="185"/>
    </location>
    <ligand>
        <name>Zn(2+)</name>
        <dbReference type="ChEBI" id="CHEBI:29105"/>
        <label>4</label>
    </ligand>
</feature>
<feature type="binding site" evidence="13 14 28">
    <location>
        <position position="250"/>
    </location>
    <ligand>
        <name>Zn(2+)</name>
        <dbReference type="ChEBI" id="CHEBI:29105"/>
        <label>5</label>
    </ligand>
</feature>
<feature type="binding site" evidence="13 14 24 25 26 27 28 29 30 31 32">
    <location>
        <position position="271"/>
    </location>
    <ligand>
        <name>Zn(2+)</name>
        <dbReference type="ChEBI" id="CHEBI:29105"/>
        <label>5</label>
    </ligand>
</feature>
<feature type="binding site" evidence="13 14 24 25 26 27 28 29 30 31 32">
    <location>
        <position position="273"/>
    </location>
    <ligand>
        <name>Zn(2+)</name>
        <dbReference type="ChEBI" id="CHEBI:29105"/>
        <label>5</label>
    </ligand>
</feature>
<feature type="binding site" evidence="13 14 27">
    <location>
        <position position="276"/>
    </location>
    <ligand>
        <name>Zn(2+)</name>
        <dbReference type="ChEBI" id="CHEBI:29105"/>
        <label>5</label>
    </ligand>
</feature>
<feature type="binding site" evidence="13 14 26 27 28 29 31 32">
    <location>
        <position position="289"/>
    </location>
    <ligand>
        <name>Zn(2+)</name>
        <dbReference type="ChEBI" id="CHEBI:29105"/>
        <label>6</label>
    </ligand>
</feature>
<feature type="binding site" evidence="13 14 26 27 28 29 31 32">
    <location>
        <position position="292"/>
    </location>
    <ligand>
        <name>Zn(2+)</name>
        <dbReference type="ChEBI" id="CHEBI:29105"/>
        <label>6</label>
    </ligand>
</feature>
<feature type="binding site" evidence="13 14 26 27 28 29 31 32">
    <location>
        <position position="336"/>
    </location>
    <ligand>
        <name>Zn(2+)</name>
        <dbReference type="ChEBI" id="CHEBI:29105"/>
        <label>6</label>
    </ligand>
</feature>
<feature type="binding site" evidence="13 14 26 27 28 31 32">
    <location>
        <position position="339"/>
    </location>
    <ligand>
        <name>Zn(2+)</name>
        <dbReference type="ChEBI" id="CHEBI:29105"/>
        <label>6</label>
    </ligand>
</feature>
<feature type="mutagenesis site" description="Lowers histone H2B deubiquitination activity; when associated with A-49." evidence="11">
    <original>C</original>
    <variation>A</variation>
    <location>
        <position position="46"/>
    </location>
</feature>
<feature type="mutagenesis site" description="Lowers histone H2B deubiquitination activity; when associated with A-46." evidence="11">
    <original>C</original>
    <variation>A</variation>
    <location>
        <position position="49"/>
    </location>
</feature>
<feature type="mutagenesis site" description="Lowers histone H2B deubiquitination activity." evidence="11">
    <original>H</original>
    <variation>A</variation>
    <location>
        <position position="77"/>
    </location>
</feature>
<feature type="mutagenesis site" description="Lowers histone H2B deubiquitination activity." evidence="11">
    <original>C</original>
    <variation>S</variation>
    <location>
        <position position="146"/>
    </location>
</feature>
<feature type="mutagenesis site" description="Lowers histone H2B deubiquitination activity." evidence="11">
    <original>H</original>
    <variation>A</variation>
    <location>
        <position position="419"/>
    </location>
</feature>
<feature type="helix" evidence="35">
    <location>
        <begin position="5"/>
        <end position="10"/>
    </location>
</feature>
<feature type="helix" evidence="35">
    <location>
        <begin position="14"/>
        <end position="32"/>
    </location>
</feature>
<feature type="helix" evidence="35">
    <location>
        <begin position="36"/>
        <end position="43"/>
    </location>
</feature>
<feature type="turn" evidence="35">
    <location>
        <begin position="47"/>
        <end position="49"/>
    </location>
</feature>
<feature type="strand" evidence="35">
    <location>
        <begin position="54"/>
        <end position="64"/>
    </location>
</feature>
<feature type="strand" evidence="35">
    <location>
        <begin position="66"/>
        <end position="68"/>
    </location>
</feature>
<feature type="turn" evidence="35">
    <location>
        <begin position="69"/>
        <end position="72"/>
    </location>
</feature>
<feature type="helix" evidence="35">
    <location>
        <begin position="73"/>
        <end position="81"/>
    </location>
</feature>
<feature type="strand" evidence="35">
    <location>
        <begin position="85"/>
        <end position="88"/>
    </location>
</feature>
<feature type="turn" evidence="35">
    <location>
        <begin position="89"/>
        <end position="91"/>
    </location>
</feature>
<feature type="strand" evidence="35">
    <location>
        <begin position="94"/>
        <end position="96"/>
    </location>
</feature>
<feature type="turn" evidence="35">
    <location>
        <begin position="97"/>
        <end position="100"/>
    </location>
</feature>
<feature type="strand" evidence="35">
    <location>
        <begin position="101"/>
        <end position="103"/>
    </location>
</feature>
<feature type="helix" evidence="35">
    <location>
        <begin position="107"/>
        <end position="110"/>
    </location>
</feature>
<feature type="helix" evidence="35">
    <location>
        <begin position="112"/>
        <end position="117"/>
    </location>
</feature>
<feature type="helix" evidence="35">
    <location>
        <begin position="118"/>
        <end position="124"/>
    </location>
</feature>
<feature type="helix" evidence="35">
    <location>
        <begin position="130"/>
        <end position="132"/>
    </location>
</feature>
<feature type="strand" evidence="35">
    <location>
        <begin position="142"/>
        <end position="144"/>
    </location>
</feature>
<feature type="helix" evidence="35">
    <location>
        <begin position="146"/>
        <end position="156"/>
    </location>
</feature>
<feature type="helix" evidence="35">
    <location>
        <begin position="159"/>
        <end position="166"/>
    </location>
</feature>
<feature type="helix" evidence="35">
    <location>
        <begin position="169"/>
        <end position="173"/>
    </location>
</feature>
<feature type="turn" evidence="35">
    <location>
        <begin position="179"/>
        <end position="181"/>
    </location>
</feature>
<feature type="helix" evidence="35">
    <location>
        <begin position="183"/>
        <end position="195"/>
    </location>
</feature>
<feature type="helix" evidence="35">
    <location>
        <begin position="214"/>
        <end position="226"/>
    </location>
</feature>
<feature type="helix" evidence="35">
    <location>
        <begin position="228"/>
        <end position="230"/>
    </location>
</feature>
<feature type="strand" evidence="35">
    <location>
        <begin position="231"/>
        <end position="234"/>
    </location>
</feature>
<feature type="helix" evidence="35">
    <location>
        <begin position="238"/>
        <end position="256"/>
    </location>
</feature>
<feature type="helix" evidence="37">
    <location>
        <begin position="260"/>
        <end position="267"/>
    </location>
</feature>
<feature type="helix" evidence="35">
    <location>
        <begin position="274"/>
        <end position="278"/>
    </location>
</feature>
<feature type="strand" evidence="35">
    <location>
        <begin position="281"/>
        <end position="288"/>
    </location>
</feature>
<feature type="turn" evidence="35">
    <location>
        <begin position="290"/>
        <end position="292"/>
    </location>
</feature>
<feature type="strand" evidence="35">
    <location>
        <begin position="297"/>
        <end position="304"/>
    </location>
</feature>
<feature type="strand" evidence="35">
    <location>
        <begin position="306"/>
        <end position="308"/>
    </location>
</feature>
<feature type="helix" evidence="35">
    <location>
        <begin position="316"/>
        <end position="324"/>
    </location>
</feature>
<feature type="strand" evidence="36">
    <location>
        <begin position="327"/>
        <end position="329"/>
    </location>
</feature>
<feature type="turn" evidence="35">
    <location>
        <begin position="337"/>
        <end position="340"/>
    </location>
</feature>
<feature type="strand" evidence="36">
    <location>
        <begin position="341"/>
        <end position="343"/>
    </location>
</feature>
<feature type="strand" evidence="35">
    <location>
        <begin position="346"/>
        <end position="354"/>
    </location>
</feature>
<feature type="strand" evidence="35">
    <location>
        <begin position="356"/>
        <end position="362"/>
    </location>
</feature>
<feature type="strand" evidence="35">
    <location>
        <begin position="365"/>
        <end position="367"/>
    </location>
</feature>
<feature type="strand" evidence="34">
    <location>
        <begin position="369"/>
        <end position="371"/>
    </location>
</feature>
<feature type="strand" evidence="35">
    <location>
        <begin position="373"/>
        <end position="375"/>
    </location>
</feature>
<feature type="strand" evidence="35">
    <location>
        <begin position="384"/>
        <end position="387"/>
    </location>
</feature>
<feature type="helix" evidence="35">
    <location>
        <begin position="389"/>
        <end position="391"/>
    </location>
</feature>
<feature type="strand" evidence="35">
    <location>
        <begin position="409"/>
        <end position="422"/>
    </location>
</feature>
<feature type="strand" evidence="35">
    <location>
        <begin position="425"/>
        <end position="433"/>
    </location>
</feature>
<feature type="helix" evidence="38">
    <location>
        <begin position="435"/>
        <end position="437"/>
    </location>
</feature>
<feature type="strand" evidence="35">
    <location>
        <begin position="439"/>
        <end position="443"/>
    </location>
</feature>
<feature type="strand" evidence="35">
    <location>
        <begin position="446"/>
        <end position="450"/>
    </location>
</feature>
<feature type="helix" evidence="35">
    <location>
        <begin position="452"/>
        <end position="455"/>
    </location>
</feature>
<feature type="strand" evidence="35">
    <location>
        <begin position="460"/>
        <end position="470"/>
    </location>
</feature>
<dbReference type="EC" id="3.4.19.12" evidence="8 11 12"/>
<dbReference type="EMBL" id="Z49939">
    <property type="protein sequence ID" value="CAA90194.1"/>
    <property type="molecule type" value="Genomic_DNA"/>
</dbReference>
<dbReference type="EMBL" id="BK006946">
    <property type="protein sequence ID" value="DAA10122.1"/>
    <property type="molecule type" value="Genomic_DNA"/>
</dbReference>
<dbReference type="PIR" id="S57591">
    <property type="entry name" value="S57591"/>
</dbReference>
<dbReference type="RefSeq" id="NP_013950.1">
    <property type="nucleotide sequence ID" value="NM_001182730.1"/>
</dbReference>
<dbReference type="PDB" id="3M99">
    <property type="method" value="X-ray"/>
    <property type="resolution" value="2.70 A"/>
    <property type="chains" value="A=1-471"/>
</dbReference>
<dbReference type="PDB" id="3MHH">
    <property type="method" value="X-ray"/>
    <property type="resolution" value="2.45 A"/>
    <property type="chains" value="A=1-471"/>
</dbReference>
<dbReference type="PDB" id="3MHS">
    <property type="method" value="X-ray"/>
    <property type="resolution" value="1.89 A"/>
    <property type="chains" value="A=1-471"/>
</dbReference>
<dbReference type="PDB" id="4FIP">
    <property type="method" value="X-ray"/>
    <property type="resolution" value="2.69 A"/>
    <property type="chains" value="A/E=1-471"/>
</dbReference>
<dbReference type="PDB" id="4FJC">
    <property type="method" value="X-ray"/>
    <property type="resolution" value="2.83 A"/>
    <property type="chains" value="A/E=1-471"/>
</dbReference>
<dbReference type="PDB" id="4FK5">
    <property type="method" value="X-ray"/>
    <property type="resolution" value="2.03 A"/>
    <property type="chains" value="A=1-471"/>
</dbReference>
<dbReference type="PDB" id="4WA6">
    <property type="method" value="X-ray"/>
    <property type="resolution" value="2.36 A"/>
    <property type="chains" value="A/D=1-471"/>
</dbReference>
<dbReference type="PDB" id="4ZUX">
    <property type="method" value="X-ray"/>
    <property type="resolution" value="3.82 A"/>
    <property type="chains" value="U/Z/e/j=1-471"/>
</dbReference>
<dbReference type="PDB" id="6AQR">
    <property type="method" value="X-ray"/>
    <property type="resolution" value="2.10 A"/>
    <property type="chains" value="A=1-471"/>
</dbReference>
<dbReference type="PDB" id="6T9L">
    <property type="method" value="EM"/>
    <property type="resolution" value="3.60 A"/>
    <property type="chains" value="K=1-471"/>
</dbReference>
<dbReference type="PDBsum" id="3M99"/>
<dbReference type="PDBsum" id="3MHH"/>
<dbReference type="PDBsum" id="3MHS"/>
<dbReference type="PDBsum" id="4FIP"/>
<dbReference type="PDBsum" id="4FJC"/>
<dbReference type="PDBsum" id="4FK5"/>
<dbReference type="PDBsum" id="4WA6"/>
<dbReference type="PDBsum" id="4ZUX"/>
<dbReference type="PDBsum" id="6AQR"/>
<dbReference type="PDBsum" id="6T9L"/>
<dbReference type="EMDB" id="EMD-10415"/>
<dbReference type="SMR" id="P50102"/>
<dbReference type="BioGRID" id="35401">
    <property type="interactions" value="473"/>
</dbReference>
<dbReference type="ComplexPortal" id="CPX-656">
    <property type="entry name" value="SAGA complex"/>
</dbReference>
<dbReference type="ComplexPortal" id="CPX-675">
    <property type="entry name" value="SLIK (SAGA-like) complex"/>
</dbReference>
<dbReference type="DIP" id="DIP-1506N"/>
<dbReference type="FunCoup" id="P50102">
    <property type="interactions" value="632"/>
</dbReference>
<dbReference type="IntAct" id="P50102">
    <property type="interactions" value="168"/>
</dbReference>
<dbReference type="MINT" id="P50102"/>
<dbReference type="STRING" id="4932.YMR223W"/>
<dbReference type="MEROPS" id="C19.087"/>
<dbReference type="PaxDb" id="4932-YMR223W"/>
<dbReference type="PeptideAtlas" id="P50102"/>
<dbReference type="EnsemblFungi" id="YMR223W_mRNA">
    <property type="protein sequence ID" value="YMR223W"/>
    <property type="gene ID" value="YMR223W"/>
</dbReference>
<dbReference type="GeneID" id="855263"/>
<dbReference type="KEGG" id="sce:YMR223W"/>
<dbReference type="AGR" id="SGD:S000004836"/>
<dbReference type="SGD" id="S000004836">
    <property type="gene designation" value="UBP8"/>
</dbReference>
<dbReference type="VEuPathDB" id="FungiDB:YMR223W"/>
<dbReference type="eggNOG" id="KOG1867">
    <property type="taxonomic scope" value="Eukaryota"/>
</dbReference>
<dbReference type="GeneTree" id="ENSGT00940000175497"/>
<dbReference type="HOGENOM" id="CLU_008279_11_2_1"/>
<dbReference type="InParanoid" id="P50102"/>
<dbReference type="OMA" id="NVSCNCI"/>
<dbReference type="OrthoDB" id="289038at2759"/>
<dbReference type="BioCyc" id="YEAST:G3O-32904-MONOMER"/>
<dbReference type="Reactome" id="R-SCE-5689880">
    <property type="pathway name" value="Ub-specific processing proteases"/>
</dbReference>
<dbReference type="BioGRID-ORCS" id="855263">
    <property type="hits" value="1 hit in 10 CRISPR screens"/>
</dbReference>
<dbReference type="EvolutionaryTrace" id="P50102"/>
<dbReference type="PRO" id="PR:P50102"/>
<dbReference type="Proteomes" id="UP000002311">
    <property type="component" value="Chromosome XIII"/>
</dbReference>
<dbReference type="RNAct" id="P50102">
    <property type="molecule type" value="protein"/>
</dbReference>
<dbReference type="GO" id="GO:0071819">
    <property type="term" value="C:DUBm complex"/>
    <property type="evidence" value="ECO:0000314"/>
    <property type="project" value="SGD"/>
</dbReference>
<dbReference type="GO" id="GO:0005634">
    <property type="term" value="C:nucleus"/>
    <property type="evidence" value="ECO:0000303"/>
    <property type="project" value="ComplexPortal"/>
</dbReference>
<dbReference type="GO" id="GO:0000124">
    <property type="term" value="C:SAGA complex"/>
    <property type="evidence" value="ECO:0000314"/>
    <property type="project" value="SGD"/>
</dbReference>
<dbReference type="GO" id="GO:0046695">
    <property type="term" value="C:SLIK (SAGA-like) complex"/>
    <property type="evidence" value="ECO:0000314"/>
    <property type="project" value="SGD"/>
</dbReference>
<dbReference type="GO" id="GO:0004843">
    <property type="term" value="F:cysteine-type deubiquitinase activity"/>
    <property type="evidence" value="ECO:0000315"/>
    <property type="project" value="SGD"/>
</dbReference>
<dbReference type="GO" id="GO:0060090">
    <property type="term" value="F:molecular adaptor activity"/>
    <property type="evidence" value="ECO:0000314"/>
    <property type="project" value="SGD"/>
</dbReference>
<dbReference type="GO" id="GO:0008270">
    <property type="term" value="F:zinc ion binding"/>
    <property type="evidence" value="ECO:0007669"/>
    <property type="project" value="UniProtKB-KW"/>
</dbReference>
<dbReference type="GO" id="GO:0016579">
    <property type="term" value="P:protein deubiquitination"/>
    <property type="evidence" value="ECO:0007669"/>
    <property type="project" value="InterPro"/>
</dbReference>
<dbReference type="GO" id="GO:0006508">
    <property type="term" value="P:proteolysis"/>
    <property type="evidence" value="ECO:0007669"/>
    <property type="project" value="UniProtKB-KW"/>
</dbReference>
<dbReference type="GO" id="GO:0006357">
    <property type="term" value="P:regulation of transcription by RNA polymerase II"/>
    <property type="evidence" value="ECO:0000314"/>
    <property type="project" value="ComplexPortal"/>
</dbReference>
<dbReference type="GO" id="GO:0008380">
    <property type="term" value="P:RNA splicing"/>
    <property type="evidence" value="ECO:0000315"/>
    <property type="project" value="SGD"/>
</dbReference>
<dbReference type="CDD" id="cd02660">
    <property type="entry name" value="Peptidase_C19D"/>
    <property type="match status" value="1"/>
</dbReference>
<dbReference type="FunFam" id="3.30.40.10:FF:000713">
    <property type="entry name" value="Ubiquitin carboxyl-terminal hydrolase 8"/>
    <property type="match status" value="1"/>
</dbReference>
<dbReference type="FunFam" id="3.90.70.10:FF:000190">
    <property type="entry name" value="Ubiquitin carboxyl-terminal hydrolase 8"/>
    <property type="match status" value="1"/>
</dbReference>
<dbReference type="Gene3D" id="3.90.70.10">
    <property type="entry name" value="Cysteine proteinases"/>
    <property type="match status" value="1"/>
</dbReference>
<dbReference type="Gene3D" id="3.30.40.10">
    <property type="entry name" value="Zinc/RING finger domain, C3HC4 (zinc finger)"/>
    <property type="match status" value="1"/>
</dbReference>
<dbReference type="InterPro" id="IPR038765">
    <property type="entry name" value="Papain-like_cys_pep_sf"/>
</dbReference>
<dbReference type="InterPro" id="IPR001394">
    <property type="entry name" value="Peptidase_C19_UCH"/>
</dbReference>
<dbReference type="InterPro" id="IPR050185">
    <property type="entry name" value="Ub_carboxyl-term_hydrolase"/>
</dbReference>
<dbReference type="InterPro" id="IPR018200">
    <property type="entry name" value="USP_CS"/>
</dbReference>
<dbReference type="InterPro" id="IPR028889">
    <property type="entry name" value="USP_dom"/>
</dbReference>
<dbReference type="InterPro" id="IPR013083">
    <property type="entry name" value="Znf_RING/FYVE/PHD"/>
</dbReference>
<dbReference type="InterPro" id="IPR001607">
    <property type="entry name" value="Znf_UBP"/>
</dbReference>
<dbReference type="PANTHER" id="PTHR21646">
    <property type="entry name" value="UBIQUITIN CARBOXYL-TERMINAL HYDROLASE"/>
    <property type="match status" value="1"/>
</dbReference>
<dbReference type="PANTHER" id="PTHR21646:SF33">
    <property type="entry name" value="UBIQUITIN CARBOXYL-TERMINAL HYDROLASE 22"/>
    <property type="match status" value="1"/>
</dbReference>
<dbReference type="Pfam" id="PF00443">
    <property type="entry name" value="UCH"/>
    <property type="match status" value="1"/>
</dbReference>
<dbReference type="Pfam" id="PF02148">
    <property type="entry name" value="zf-UBP"/>
    <property type="match status" value="1"/>
</dbReference>
<dbReference type="SMART" id="SM00290">
    <property type="entry name" value="ZnF_UBP"/>
    <property type="match status" value="1"/>
</dbReference>
<dbReference type="SUPFAM" id="SSF54001">
    <property type="entry name" value="Cysteine proteinases"/>
    <property type="match status" value="1"/>
</dbReference>
<dbReference type="SUPFAM" id="SSF57850">
    <property type="entry name" value="RING/U-box"/>
    <property type="match status" value="1"/>
</dbReference>
<dbReference type="PROSITE" id="PS00972">
    <property type="entry name" value="USP_1"/>
    <property type="match status" value="1"/>
</dbReference>
<dbReference type="PROSITE" id="PS00973">
    <property type="entry name" value="USP_2"/>
    <property type="match status" value="1"/>
</dbReference>
<dbReference type="PROSITE" id="PS50235">
    <property type="entry name" value="USP_3"/>
    <property type="match status" value="1"/>
</dbReference>
<dbReference type="PROSITE" id="PS50271">
    <property type="entry name" value="ZF_UBP"/>
    <property type="match status" value="1"/>
</dbReference>